<comment type="cofactor">
    <cofactor evidence="1">
        <name>heme</name>
        <dbReference type="ChEBI" id="CHEBI:30413"/>
    </cofactor>
</comment>
<comment type="subcellular location">
    <subcellularLocation>
        <location evidence="4">Cell inner membrane</location>
        <topology evidence="2">Multi-pass membrane protein</topology>
    </subcellularLocation>
</comment>
<comment type="induction">
    <text evidence="3">Up-regulated by the oxygen-responsive transcription factor FNR under anaerobic conditions. Repressed in the presence of nitrate or nitrite via the two-component systems NarXL and NarPQ, respectively.</text>
</comment>
<comment type="similarity">
    <text evidence="4">Belongs to the PhsC family.</text>
</comment>
<evidence type="ECO:0000250" key="1">
    <source>
        <dbReference type="UniProtKB" id="P0AEK7"/>
    </source>
</evidence>
<evidence type="ECO:0000255" key="2"/>
<evidence type="ECO:0000269" key="3">
    <source>
    </source>
</evidence>
<evidence type="ECO:0000305" key="4"/>
<protein>
    <recommendedName>
        <fullName evidence="4">Putative cytochrome YdhU</fullName>
    </recommendedName>
    <alternativeName>
        <fullName evidence="4">Protein PhsC homolog</fullName>
    </alternativeName>
</protein>
<keyword id="KW-0997">Cell inner membrane</keyword>
<keyword id="KW-1003">Cell membrane</keyword>
<keyword id="KW-0408">Iron</keyword>
<keyword id="KW-0472">Membrane</keyword>
<keyword id="KW-0479">Metal-binding</keyword>
<keyword id="KW-1185">Reference proteome</keyword>
<keyword id="KW-0812">Transmembrane</keyword>
<keyword id="KW-1133">Transmembrane helix</keyword>
<gene>
    <name type="primary">ydhU</name>
    <name type="ordered locus">b1670</name>
    <name type="ordered locus">JW1660</name>
</gene>
<reference key="1">
    <citation type="journal article" date="1997" name="J. Bacteriol.">
        <title>Analysis of the boundaries of Salmonella pathogenicity island 2 and the corresponding chromosomal region of Escherichia coli K-12.</title>
        <authorList>
            <person name="Hensel M."/>
            <person name="Shea J.E."/>
            <person name="Baeumler A.J."/>
            <person name="Gleeson C."/>
            <person name="Blattner F.R."/>
            <person name="Holden D.W."/>
        </authorList>
    </citation>
    <scope>NUCLEOTIDE SEQUENCE [GENOMIC DNA]</scope>
    <source>
        <strain>K12 / MG1655 / ATCC 47076</strain>
    </source>
</reference>
<reference key="2">
    <citation type="journal article" date="1996" name="DNA Res.">
        <title>A 570-kb DNA sequence of the Escherichia coli K-12 genome corresponding to the 28.0-40.1 min region on the linkage map.</title>
        <authorList>
            <person name="Aiba H."/>
            <person name="Baba T."/>
            <person name="Fujita K."/>
            <person name="Hayashi K."/>
            <person name="Inada T."/>
            <person name="Isono K."/>
            <person name="Itoh T."/>
            <person name="Kasai H."/>
            <person name="Kashimoto K."/>
            <person name="Kimura S."/>
            <person name="Kitakawa M."/>
            <person name="Kitagawa M."/>
            <person name="Makino K."/>
            <person name="Miki T."/>
            <person name="Mizobuchi K."/>
            <person name="Mori H."/>
            <person name="Mori T."/>
            <person name="Motomura K."/>
            <person name="Nakade S."/>
            <person name="Nakamura Y."/>
            <person name="Nashimoto H."/>
            <person name="Nishio Y."/>
            <person name="Oshima T."/>
            <person name="Saito N."/>
            <person name="Sampei G."/>
            <person name="Seki Y."/>
            <person name="Sivasundaram S."/>
            <person name="Tagami H."/>
            <person name="Takeda J."/>
            <person name="Takemoto K."/>
            <person name="Takeuchi Y."/>
            <person name="Wada C."/>
            <person name="Yamamoto Y."/>
            <person name="Horiuchi T."/>
        </authorList>
    </citation>
    <scope>NUCLEOTIDE SEQUENCE [LARGE SCALE GENOMIC DNA]</scope>
    <source>
        <strain>K12 / W3110 / ATCC 27325 / DSM 5911</strain>
    </source>
</reference>
<reference key="3">
    <citation type="journal article" date="1997" name="Science">
        <title>The complete genome sequence of Escherichia coli K-12.</title>
        <authorList>
            <person name="Blattner F.R."/>
            <person name="Plunkett G. III"/>
            <person name="Bloch C.A."/>
            <person name="Perna N.T."/>
            <person name="Burland V."/>
            <person name="Riley M."/>
            <person name="Collado-Vides J."/>
            <person name="Glasner J.D."/>
            <person name="Rode C.K."/>
            <person name="Mayhew G.F."/>
            <person name="Gregor J."/>
            <person name="Davis N.W."/>
            <person name="Kirkpatrick H.A."/>
            <person name="Goeden M.A."/>
            <person name="Rose D.J."/>
            <person name="Mau B."/>
            <person name="Shao Y."/>
        </authorList>
    </citation>
    <scope>NUCLEOTIDE SEQUENCE [LARGE SCALE GENOMIC DNA]</scope>
    <source>
        <strain>K12 / MG1655 / ATCC 47076</strain>
    </source>
</reference>
<reference key="4">
    <citation type="journal article" date="2006" name="Mol. Syst. Biol.">
        <title>Highly accurate genome sequences of Escherichia coli K-12 strains MG1655 and W3110.</title>
        <authorList>
            <person name="Hayashi K."/>
            <person name="Morooka N."/>
            <person name="Yamamoto Y."/>
            <person name="Fujita K."/>
            <person name="Isono K."/>
            <person name="Choi S."/>
            <person name="Ohtsubo E."/>
            <person name="Baba T."/>
            <person name="Wanner B.L."/>
            <person name="Mori H."/>
            <person name="Horiuchi T."/>
        </authorList>
    </citation>
    <scope>NUCLEOTIDE SEQUENCE [LARGE SCALE GENOMIC DNA]</scope>
    <source>
        <strain>K12 / W3110 / ATCC 27325 / DSM 5911</strain>
    </source>
</reference>
<reference key="5">
    <citation type="journal article" date="2008" name="Microbiology">
        <title>Characterization of the Escherichia coli K-12 ydhYVWXUT operon: regulation by FNR, NarL and NarP.</title>
        <authorList>
            <person name="Partridge J.D."/>
            <person name="Browning D.F."/>
            <person name="Xu M."/>
            <person name="Newnham L.J."/>
            <person name="Scott C."/>
            <person name="Roberts R.E."/>
            <person name="Poole R.K."/>
            <person name="Green J."/>
        </authorList>
    </citation>
    <scope>INDUCTION</scope>
    <source>
        <strain>K12</strain>
    </source>
</reference>
<sequence>MNPSQHAEQFQSQLANYVPQFTPEFWPVWLIIAGVLLVGMWLVLGLHALLRARGVKKSATDHGEKIYLYSKAVRLWHWSNALLFVLLLASGLINHFAMVGATAVKSLVAVHEVCGFLLLACWLGFVLINAVGDNGHHYRIRRQGWLERAAKQTRFYLFGIMQGEEHPFPATTQSKFNPLQQVAYVGVMYGLLPLLLLTGLLCLYPQAVGDVFPGVRYWLLQTHFALAFISLFFIFGHLYLCTTGRTPHETFKSMVDGYHRH</sequence>
<name>YDHU_ECOLI</name>
<organism>
    <name type="scientific">Escherichia coli (strain K12)</name>
    <dbReference type="NCBI Taxonomy" id="83333"/>
    <lineage>
        <taxon>Bacteria</taxon>
        <taxon>Pseudomonadati</taxon>
        <taxon>Pseudomonadota</taxon>
        <taxon>Gammaproteobacteria</taxon>
        <taxon>Enterobacterales</taxon>
        <taxon>Enterobacteriaceae</taxon>
        <taxon>Escherichia</taxon>
    </lineage>
</organism>
<feature type="chain" id="PRO_0000058407" description="Putative cytochrome YdhU">
    <location>
        <begin position="1"/>
        <end position="261"/>
    </location>
</feature>
<feature type="transmembrane region" description="Helical" evidence="2">
    <location>
        <begin position="25"/>
        <end position="45"/>
    </location>
</feature>
<feature type="transmembrane region" description="Helical" evidence="2">
    <location>
        <begin position="81"/>
        <end position="101"/>
    </location>
</feature>
<feature type="transmembrane region" description="Helical" evidence="2">
    <location>
        <begin position="108"/>
        <end position="128"/>
    </location>
</feature>
<feature type="transmembrane region" description="Helical" evidence="2">
    <location>
        <begin position="182"/>
        <end position="202"/>
    </location>
</feature>
<feature type="transmembrane region" description="Helical" evidence="2">
    <location>
        <begin position="224"/>
        <end position="244"/>
    </location>
</feature>
<feature type="binding site" description="axial binding residue" evidence="1">
    <location>
        <position position="77"/>
    </location>
    <ligand>
        <name>heme b</name>
        <dbReference type="ChEBI" id="CHEBI:60344"/>
        <label>1</label>
    </ligand>
    <ligandPart>
        <name>Fe</name>
        <dbReference type="ChEBI" id="CHEBI:18248"/>
    </ligandPart>
</feature>
<feature type="binding site" description="axial binding residue" evidence="1">
    <location>
        <position position="111"/>
    </location>
    <ligand>
        <name>heme b</name>
        <dbReference type="ChEBI" id="CHEBI:60344"/>
        <label>2</label>
    </ligand>
    <ligandPart>
        <name>Fe</name>
        <dbReference type="ChEBI" id="CHEBI:18248"/>
    </ligandPart>
</feature>
<feature type="binding site" description="axial binding residue" evidence="1">
    <location>
        <position position="223"/>
    </location>
    <ligand>
        <name>heme b</name>
        <dbReference type="ChEBI" id="CHEBI:60344"/>
        <label>2</label>
    </ligand>
    <ligandPart>
        <name>Fe</name>
        <dbReference type="ChEBI" id="CHEBI:18248"/>
    </ligandPart>
</feature>
<feature type="binding site" evidence="1">
    <location>
        <position position="237"/>
    </location>
    <ligand>
        <name>a menaquinone</name>
        <dbReference type="ChEBI" id="CHEBI:16374"/>
    </ligand>
</feature>
<feature type="binding site" description="axial binding residue" evidence="1">
    <location>
        <position position="237"/>
    </location>
    <ligand>
        <name>heme b</name>
        <dbReference type="ChEBI" id="CHEBI:60344"/>
        <label>1</label>
    </ligand>
    <ligandPart>
        <name>Fe</name>
        <dbReference type="ChEBI" id="CHEBI:18248"/>
    </ligandPart>
</feature>
<proteinExistence type="evidence at transcript level"/>
<accession>P77409</accession>
<dbReference type="EMBL" id="U68703">
    <property type="protein sequence ID" value="AAB47946.1"/>
    <property type="molecule type" value="Genomic_DNA"/>
</dbReference>
<dbReference type="EMBL" id="U00096">
    <property type="protein sequence ID" value="AAC74740.1"/>
    <property type="molecule type" value="Genomic_DNA"/>
</dbReference>
<dbReference type="EMBL" id="AP009048">
    <property type="protein sequence ID" value="BAA15442.1"/>
    <property type="molecule type" value="Genomic_DNA"/>
</dbReference>
<dbReference type="PIR" id="F64924">
    <property type="entry name" value="F64924"/>
</dbReference>
<dbReference type="RefSeq" id="NP_416185.1">
    <property type="nucleotide sequence ID" value="NC_000913.3"/>
</dbReference>
<dbReference type="SMR" id="P77409"/>
<dbReference type="BioGRID" id="4262230">
    <property type="interactions" value="6"/>
</dbReference>
<dbReference type="BioGRID" id="849981">
    <property type="interactions" value="1"/>
</dbReference>
<dbReference type="DIP" id="DIP-11740N"/>
<dbReference type="FunCoup" id="P77409">
    <property type="interactions" value="72"/>
</dbReference>
<dbReference type="IntAct" id="P77409">
    <property type="interactions" value="4"/>
</dbReference>
<dbReference type="STRING" id="511145.b1670"/>
<dbReference type="PaxDb" id="511145-b1670"/>
<dbReference type="EnsemblBacteria" id="AAC74740">
    <property type="protein sequence ID" value="AAC74740"/>
    <property type="gene ID" value="b1670"/>
</dbReference>
<dbReference type="GeneID" id="945608"/>
<dbReference type="KEGG" id="ecj:JW1660"/>
<dbReference type="KEGG" id="eco:b1670"/>
<dbReference type="KEGG" id="ecoc:C3026_09575"/>
<dbReference type="PATRIC" id="fig|1411691.4.peg.589"/>
<dbReference type="EchoBASE" id="EB3713"/>
<dbReference type="eggNOG" id="COG4117">
    <property type="taxonomic scope" value="Bacteria"/>
</dbReference>
<dbReference type="HOGENOM" id="CLU_097472_0_0_6"/>
<dbReference type="InParanoid" id="P77409"/>
<dbReference type="OMA" id="FWHWMQA"/>
<dbReference type="OrthoDB" id="1117555at2"/>
<dbReference type="PhylomeDB" id="P77409"/>
<dbReference type="BioCyc" id="EcoCyc:G6898-MONOMER"/>
<dbReference type="PRO" id="PR:P77409"/>
<dbReference type="Proteomes" id="UP000000625">
    <property type="component" value="Chromosome"/>
</dbReference>
<dbReference type="GO" id="GO:0005886">
    <property type="term" value="C:plasma membrane"/>
    <property type="evidence" value="ECO:0000314"/>
    <property type="project" value="EcoCyc"/>
</dbReference>
<dbReference type="GO" id="GO:0009055">
    <property type="term" value="F:electron transfer activity"/>
    <property type="evidence" value="ECO:0007669"/>
    <property type="project" value="InterPro"/>
</dbReference>
<dbReference type="GO" id="GO:0020037">
    <property type="term" value="F:heme binding"/>
    <property type="evidence" value="ECO:0000318"/>
    <property type="project" value="GO_Central"/>
</dbReference>
<dbReference type="GO" id="GO:0046872">
    <property type="term" value="F:metal ion binding"/>
    <property type="evidence" value="ECO:0007669"/>
    <property type="project" value="UniProtKB-KW"/>
</dbReference>
<dbReference type="GO" id="GO:0022904">
    <property type="term" value="P:respiratory electron transport chain"/>
    <property type="evidence" value="ECO:0007669"/>
    <property type="project" value="InterPro"/>
</dbReference>
<dbReference type="FunFam" id="1.20.950.20:FF:000004">
    <property type="entry name" value="Thiosulfate reductase cytochrome B subunit"/>
    <property type="match status" value="1"/>
</dbReference>
<dbReference type="Gene3D" id="1.20.950.20">
    <property type="entry name" value="Transmembrane di-heme cytochromes, Chain C"/>
    <property type="match status" value="1"/>
</dbReference>
<dbReference type="InterPro" id="IPR011577">
    <property type="entry name" value="Cyt_b561_bac/Ni-Hgenase"/>
</dbReference>
<dbReference type="InterPro" id="IPR016174">
    <property type="entry name" value="Di-haem_cyt_TM"/>
</dbReference>
<dbReference type="InterPro" id="IPR051542">
    <property type="entry name" value="Hydrogenase_cytochrome"/>
</dbReference>
<dbReference type="NCBIfam" id="NF011582">
    <property type="entry name" value="PRK15006.1"/>
    <property type="match status" value="1"/>
</dbReference>
<dbReference type="PANTHER" id="PTHR30485:SF1">
    <property type="entry name" value="CYTOCHROME YDHU-RELATED"/>
    <property type="match status" value="1"/>
</dbReference>
<dbReference type="PANTHER" id="PTHR30485">
    <property type="entry name" value="NI/FE-HYDROGENASE 1 B-TYPE CYTOCHROME SUBUNIT"/>
    <property type="match status" value="1"/>
</dbReference>
<dbReference type="Pfam" id="PF01292">
    <property type="entry name" value="Ni_hydr_CYTB"/>
    <property type="match status" value="1"/>
</dbReference>
<dbReference type="SUPFAM" id="SSF81342">
    <property type="entry name" value="Transmembrane di-heme cytochromes"/>
    <property type="match status" value="1"/>
</dbReference>